<reference key="1">
    <citation type="journal article" date="2011" name="Stand. Genomic Sci.">
        <title>Complete genome sequence of 'Thioalkalivibrio sulfidophilus' HL-EbGr7.</title>
        <authorList>
            <person name="Muyzer G."/>
            <person name="Sorokin D.Y."/>
            <person name="Mavromatis K."/>
            <person name="Lapidus A."/>
            <person name="Clum A."/>
            <person name="Ivanova N."/>
            <person name="Pati A."/>
            <person name="d'Haeseleer P."/>
            <person name="Woyke T."/>
            <person name="Kyrpides N.C."/>
        </authorList>
    </citation>
    <scope>NUCLEOTIDE SEQUENCE [LARGE SCALE GENOMIC DNA]</scope>
    <source>
        <strain>HL-EbGR7</strain>
    </source>
</reference>
<dbReference type="EC" id="6.1.1.6" evidence="1"/>
<dbReference type="EMBL" id="CP001339">
    <property type="protein sequence ID" value="ACL72546.1"/>
    <property type="molecule type" value="Genomic_DNA"/>
</dbReference>
<dbReference type="RefSeq" id="WP_012638029.1">
    <property type="nucleotide sequence ID" value="NC_011901.1"/>
</dbReference>
<dbReference type="SMR" id="B8GRJ2"/>
<dbReference type="STRING" id="396588.Tgr7_1462"/>
<dbReference type="KEGG" id="tgr:Tgr7_1462"/>
<dbReference type="eggNOG" id="COG1190">
    <property type="taxonomic scope" value="Bacteria"/>
</dbReference>
<dbReference type="HOGENOM" id="CLU_008255_6_0_6"/>
<dbReference type="OrthoDB" id="9802326at2"/>
<dbReference type="Proteomes" id="UP000002383">
    <property type="component" value="Chromosome"/>
</dbReference>
<dbReference type="GO" id="GO:0005829">
    <property type="term" value="C:cytosol"/>
    <property type="evidence" value="ECO:0007669"/>
    <property type="project" value="TreeGrafter"/>
</dbReference>
<dbReference type="GO" id="GO:0005524">
    <property type="term" value="F:ATP binding"/>
    <property type="evidence" value="ECO:0007669"/>
    <property type="project" value="UniProtKB-UniRule"/>
</dbReference>
<dbReference type="GO" id="GO:0004824">
    <property type="term" value="F:lysine-tRNA ligase activity"/>
    <property type="evidence" value="ECO:0007669"/>
    <property type="project" value="UniProtKB-UniRule"/>
</dbReference>
<dbReference type="GO" id="GO:0000287">
    <property type="term" value="F:magnesium ion binding"/>
    <property type="evidence" value="ECO:0007669"/>
    <property type="project" value="UniProtKB-UniRule"/>
</dbReference>
<dbReference type="GO" id="GO:0000049">
    <property type="term" value="F:tRNA binding"/>
    <property type="evidence" value="ECO:0007669"/>
    <property type="project" value="TreeGrafter"/>
</dbReference>
<dbReference type="GO" id="GO:0006430">
    <property type="term" value="P:lysyl-tRNA aminoacylation"/>
    <property type="evidence" value="ECO:0007669"/>
    <property type="project" value="UniProtKB-UniRule"/>
</dbReference>
<dbReference type="CDD" id="cd00775">
    <property type="entry name" value="LysRS_core"/>
    <property type="match status" value="1"/>
</dbReference>
<dbReference type="CDD" id="cd04322">
    <property type="entry name" value="LysRS_N"/>
    <property type="match status" value="1"/>
</dbReference>
<dbReference type="FunFam" id="2.40.50.140:FF:000024">
    <property type="entry name" value="Lysine--tRNA ligase"/>
    <property type="match status" value="1"/>
</dbReference>
<dbReference type="FunFam" id="3.30.930.10:FF:000001">
    <property type="entry name" value="Lysine--tRNA ligase"/>
    <property type="match status" value="1"/>
</dbReference>
<dbReference type="Gene3D" id="3.30.930.10">
    <property type="entry name" value="Bira Bifunctional Protein, Domain 2"/>
    <property type="match status" value="1"/>
</dbReference>
<dbReference type="Gene3D" id="2.40.50.140">
    <property type="entry name" value="Nucleic acid-binding proteins"/>
    <property type="match status" value="1"/>
</dbReference>
<dbReference type="HAMAP" id="MF_00252">
    <property type="entry name" value="Lys_tRNA_synth_class2"/>
    <property type="match status" value="1"/>
</dbReference>
<dbReference type="InterPro" id="IPR004364">
    <property type="entry name" value="Aa-tRNA-synt_II"/>
</dbReference>
<dbReference type="InterPro" id="IPR006195">
    <property type="entry name" value="aa-tRNA-synth_II"/>
</dbReference>
<dbReference type="InterPro" id="IPR045864">
    <property type="entry name" value="aa-tRNA-synth_II/BPL/LPL"/>
</dbReference>
<dbReference type="InterPro" id="IPR002313">
    <property type="entry name" value="Lys-tRNA-ligase_II"/>
</dbReference>
<dbReference type="InterPro" id="IPR044136">
    <property type="entry name" value="Lys-tRNA-ligase_II_N"/>
</dbReference>
<dbReference type="InterPro" id="IPR018149">
    <property type="entry name" value="Lys-tRNA-synth_II_C"/>
</dbReference>
<dbReference type="InterPro" id="IPR012340">
    <property type="entry name" value="NA-bd_OB-fold"/>
</dbReference>
<dbReference type="InterPro" id="IPR004365">
    <property type="entry name" value="NA-bd_OB_tRNA"/>
</dbReference>
<dbReference type="NCBIfam" id="TIGR00499">
    <property type="entry name" value="lysS_bact"/>
    <property type="match status" value="1"/>
</dbReference>
<dbReference type="NCBIfam" id="NF001756">
    <property type="entry name" value="PRK00484.1"/>
    <property type="match status" value="1"/>
</dbReference>
<dbReference type="PANTHER" id="PTHR42918:SF15">
    <property type="entry name" value="LYSINE--TRNA LIGASE, CHLOROPLASTIC_MITOCHONDRIAL"/>
    <property type="match status" value="1"/>
</dbReference>
<dbReference type="PANTHER" id="PTHR42918">
    <property type="entry name" value="LYSYL-TRNA SYNTHETASE"/>
    <property type="match status" value="1"/>
</dbReference>
<dbReference type="Pfam" id="PF00152">
    <property type="entry name" value="tRNA-synt_2"/>
    <property type="match status" value="1"/>
</dbReference>
<dbReference type="Pfam" id="PF01336">
    <property type="entry name" value="tRNA_anti-codon"/>
    <property type="match status" value="1"/>
</dbReference>
<dbReference type="PRINTS" id="PR00982">
    <property type="entry name" value="TRNASYNTHLYS"/>
</dbReference>
<dbReference type="SUPFAM" id="SSF55681">
    <property type="entry name" value="Class II aaRS and biotin synthetases"/>
    <property type="match status" value="1"/>
</dbReference>
<dbReference type="SUPFAM" id="SSF50249">
    <property type="entry name" value="Nucleic acid-binding proteins"/>
    <property type="match status" value="1"/>
</dbReference>
<dbReference type="PROSITE" id="PS50862">
    <property type="entry name" value="AA_TRNA_LIGASE_II"/>
    <property type="match status" value="1"/>
</dbReference>
<accession>B8GRJ2</accession>
<organism>
    <name type="scientific">Thioalkalivibrio sulfidiphilus (strain HL-EbGR7)</name>
    <dbReference type="NCBI Taxonomy" id="396588"/>
    <lineage>
        <taxon>Bacteria</taxon>
        <taxon>Pseudomonadati</taxon>
        <taxon>Pseudomonadota</taxon>
        <taxon>Gammaproteobacteria</taxon>
        <taxon>Chromatiales</taxon>
        <taxon>Ectothiorhodospiraceae</taxon>
        <taxon>Thioalkalivibrio</taxon>
    </lineage>
</organism>
<evidence type="ECO:0000255" key="1">
    <source>
        <dbReference type="HAMAP-Rule" id="MF_00252"/>
    </source>
</evidence>
<comment type="catalytic activity">
    <reaction evidence="1">
        <text>tRNA(Lys) + L-lysine + ATP = L-lysyl-tRNA(Lys) + AMP + diphosphate</text>
        <dbReference type="Rhea" id="RHEA:20792"/>
        <dbReference type="Rhea" id="RHEA-COMP:9696"/>
        <dbReference type="Rhea" id="RHEA-COMP:9697"/>
        <dbReference type="ChEBI" id="CHEBI:30616"/>
        <dbReference type="ChEBI" id="CHEBI:32551"/>
        <dbReference type="ChEBI" id="CHEBI:33019"/>
        <dbReference type="ChEBI" id="CHEBI:78442"/>
        <dbReference type="ChEBI" id="CHEBI:78529"/>
        <dbReference type="ChEBI" id="CHEBI:456215"/>
        <dbReference type="EC" id="6.1.1.6"/>
    </reaction>
</comment>
<comment type="cofactor">
    <cofactor evidence="1">
        <name>Mg(2+)</name>
        <dbReference type="ChEBI" id="CHEBI:18420"/>
    </cofactor>
    <text evidence="1">Binds 3 Mg(2+) ions per subunit.</text>
</comment>
<comment type="subunit">
    <text evidence="1">Homodimer.</text>
</comment>
<comment type="subcellular location">
    <subcellularLocation>
        <location evidence="1">Cytoplasm</location>
    </subcellularLocation>
</comment>
<comment type="similarity">
    <text evidence="1">Belongs to the class-II aminoacyl-tRNA synthetase family.</text>
</comment>
<name>SYK_THISH</name>
<feature type="chain" id="PRO_1000204576" description="Lysine--tRNA ligase">
    <location>
        <begin position="1"/>
        <end position="499"/>
    </location>
</feature>
<feature type="binding site" evidence="1">
    <location>
        <position position="409"/>
    </location>
    <ligand>
        <name>Mg(2+)</name>
        <dbReference type="ChEBI" id="CHEBI:18420"/>
        <label>1</label>
    </ligand>
</feature>
<feature type="binding site" evidence="1">
    <location>
        <position position="416"/>
    </location>
    <ligand>
        <name>Mg(2+)</name>
        <dbReference type="ChEBI" id="CHEBI:18420"/>
        <label>1</label>
    </ligand>
</feature>
<feature type="binding site" evidence="1">
    <location>
        <position position="416"/>
    </location>
    <ligand>
        <name>Mg(2+)</name>
        <dbReference type="ChEBI" id="CHEBI:18420"/>
        <label>2</label>
    </ligand>
</feature>
<gene>
    <name evidence="1" type="primary">lysS</name>
    <name type="ordered locus">Tgr7_1462</name>
</gene>
<sequence>MTDQEQGQEEHKLIAQRREKLTKLRERGVAFPNDFRRNVMSGELHAEYDAKPAEFFEQNAIRVSVAGRMMAKRIMGKASFTQILDMSGRIQLFIQRDSLPDGAYSDFKTWDVGDILGAEGTLFKTKTGELTVNVDSLRLLTKSLRPLPEKFHGLSDTETRYRQRYVDLIMNEPVRETFRTRTRVIQFIRQFLDQRGFLEVETPMMQAIPGGATARPFATHHHALDMQLFLRIAPELYLKRLVVGGFERVYEINRNFRNEGLSTRHNPEFTMVEFYEAYANYHDLMDLTEDLLRDLTLEVLGSTQVHYQGETYDFERPFTRMTVKESILQHNPDVSEAELADLERARAVAQRLGIPLKDSYGLGKVWIEIFEKTVEGNLKDPTFITAYPTEVSPLARRNDEDPFVTDRFEFFVGGREIANGFSELNDYEDQAERFRKQVQEKEAGDDEAMHFDADYLRALEHGMPPTAGEGIGIDRLVMLLTDSPSIRDVLLFPHMRPES</sequence>
<keyword id="KW-0030">Aminoacyl-tRNA synthetase</keyword>
<keyword id="KW-0067">ATP-binding</keyword>
<keyword id="KW-0963">Cytoplasm</keyword>
<keyword id="KW-0436">Ligase</keyword>
<keyword id="KW-0460">Magnesium</keyword>
<keyword id="KW-0479">Metal-binding</keyword>
<keyword id="KW-0547">Nucleotide-binding</keyword>
<keyword id="KW-0648">Protein biosynthesis</keyword>
<keyword id="KW-1185">Reference proteome</keyword>
<proteinExistence type="inferred from homology"/>
<protein>
    <recommendedName>
        <fullName evidence="1">Lysine--tRNA ligase</fullName>
        <ecNumber evidence="1">6.1.1.6</ecNumber>
    </recommendedName>
    <alternativeName>
        <fullName evidence="1">Lysyl-tRNA synthetase</fullName>
        <shortName evidence="1">LysRS</shortName>
    </alternativeName>
</protein>